<name>PUR5_VIBC1</name>
<organism>
    <name type="scientific">Vibrio campbellii (strain ATCC BAA-1116)</name>
    <dbReference type="NCBI Taxonomy" id="2902295"/>
    <lineage>
        <taxon>Bacteria</taxon>
        <taxon>Pseudomonadati</taxon>
        <taxon>Pseudomonadota</taxon>
        <taxon>Gammaproteobacteria</taxon>
        <taxon>Vibrionales</taxon>
        <taxon>Vibrionaceae</taxon>
        <taxon>Vibrio</taxon>
    </lineage>
</organism>
<protein>
    <recommendedName>
        <fullName evidence="1">Phosphoribosylformylglycinamidine cyclo-ligase</fullName>
        <ecNumber evidence="1">6.3.3.1</ecNumber>
    </recommendedName>
    <alternativeName>
        <fullName evidence="1">AIR synthase</fullName>
    </alternativeName>
    <alternativeName>
        <fullName evidence="1">AIRS</fullName>
    </alternativeName>
    <alternativeName>
        <fullName evidence="1">Phosphoribosyl-aminoimidazole synthetase</fullName>
    </alternativeName>
</protein>
<reference key="1">
    <citation type="submission" date="2007-08" db="EMBL/GenBank/DDBJ databases">
        <authorList>
            <consortium name="The Vibrio harveyi Genome Sequencing Project"/>
            <person name="Bassler B."/>
            <person name="Clifton S.W."/>
            <person name="Fulton L."/>
            <person name="Delehaunty K."/>
            <person name="Fronick C."/>
            <person name="Harrison M."/>
            <person name="Markivic C."/>
            <person name="Fulton R."/>
            <person name="Tin-Wollam A.-M."/>
            <person name="Shah N."/>
            <person name="Pepin K."/>
            <person name="Nash W."/>
            <person name="Thiruvilangam P."/>
            <person name="Bhonagiri V."/>
            <person name="Waters C."/>
            <person name="Tu K.C."/>
            <person name="Irgon J."/>
            <person name="Wilson R.K."/>
        </authorList>
    </citation>
    <scope>NUCLEOTIDE SEQUENCE [LARGE SCALE GENOMIC DNA]</scope>
    <source>
        <strain>ATCC BAA-1116 / BB120</strain>
    </source>
</reference>
<sequence length="346" mass="36878">MSGNNSSLSYKDAGVDIDAGNALVDRIKGAVKRTRRPEVMGGIGGFGALCELPTKYKQPVLVSGTDGVGTKLRLALDMNKHDTIGVDLVAMCVNDLIVQGAEPLFFLDYYATGKLDVDTAADVVSGIADGCVQAGCALIGGETAEMPGMYEGEDYDVAGFCVGVVEKEDVIDGTKVAAGDALIAVGSSGPHSNGYSLIRKILEVSGADKNEELAGRTIGEHLLEPTKIYIKSALKMIEKHDIHAISHITGGGFWENIPRVLLEGTKAVIDGNSWEWPIIFKWLQEKGNVETHEMYRTFNCGVGLVVALPKDQADAAVALLKEEGENAWVIGEIAQAEANEEQVEIQ</sequence>
<dbReference type="EC" id="6.3.3.1" evidence="1"/>
<dbReference type="EMBL" id="CP000789">
    <property type="protein sequence ID" value="ABU72149.1"/>
    <property type="molecule type" value="Genomic_DNA"/>
</dbReference>
<dbReference type="RefSeq" id="WP_012128669.1">
    <property type="nucleotide sequence ID" value="NC_009783.1"/>
</dbReference>
<dbReference type="SMR" id="A7MY25"/>
<dbReference type="KEGG" id="vha:VIBHAR_03200"/>
<dbReference type="PATRIC" id="fig|338187.25.peg.2988"/>
<dbReference type="UniPathway" id="UPA00074">
    <property type="reaction ID" value="UER00129"/>
</dbReference>
<dbReference type="Proteomes" id="UP000008152">
    <property type="component" value="Chromosome I"/>
</dbReference>
<dbReference type="GO" id="GO:0005829">
    <property type="term" value="C:cytosol"/>
    <property type="evidence" value="ECO:0007669"/>
    <property type="project" value="TreeGrafter"/>
</dbReference>
<dbReference type="GO" id="GO:0005524">
    <property type="term" value="F:ATP binding"/>
    <property type="evidence" value="ECO:0007669"/>
    <property type="project" value="UniProtKB-KW"/>
</dbReference>
<dbReference type="GO" id="GO:0004637">
    <property type="term" value="F:phosphoribosylamine-glycine ligase activity"/>
    <property type="evidence" value="ECO:0007669"/>
    <property type="project" value="TreeGrafter"/>
</dbReference>
<dbReference type="GO" id="GO:0004641">
    <property type="term" value="F:phosphoribosylformylglycinamidine cyclo-ligase activity"/>
    <property type="evidence" value="ECO:0007669"/>
    <property type="project" value="UniProtKB-UniRule"/>
</dbReference>
<dbReference type="GO" id="GO:0006189">
    <property type="term" value="P:'de novo' IMP biosynthetic process"/>
    <property type="evidence" value="ECO:0007669"/>
    <property type="project" value="UniProtKB-UniRule"/>
</dbReference>
<dbReference type="GO" id="GO:0046084">
    <property type="term" value="P:adenine biosynthetic process"/>
    <property type="evidence" value="ECO:0007669"/>
    <property type="project" value="TreeGrafter"/>
</dbReference>
<dbReference type="CDD" id="cd02196">
    <property type="entry name" value="PurM"/>
    <property type="match status" value="1"/>
</dbReference>
<dbReference type="FunFam" id="3.30.1330.10:FF:000001">
    <property type="entry name" value="Phosphoribosylformylglycinamidine cyclo-ligase"/>
    <property type="match status" value="1"/>
</dbReference>
<dbReference type="FunFam" id="3.90.650.10:FF:000001">
    <property type="entry name" value="Phosphoribosylformylglycinamidine cyclo-ligase"/>
    <property type="match status" value="1"/>
</dbReference>
<dbReference type="Gene3D" id="3.90.650.10">
    <property type="entry name" value="PurM-like C-terminal domain"/>
    <property type="match status" value="1"/>
</dbReference>
<dbReference type="Gene3D" id="3.30.1330.10">
    <property type="entry name" value="PurM-like, N-terminal domain"/>
    <property type="match status" value="1"/>
</dbReference>
<dbReference type="HAMAP" id="MF_00741">
    <property type="entry name" value="AIRS"/>
    <property type="match status" value="1"/>
</dbReference>
<dbReference type="InterPro" id="IPR010918">
    <property type="entry name" value="PurM-like_C_dom"/>
</dbReference>
<dbReference type="InterPro" id="IPR036676">
    <property type="entry name" value="PurM-like_C_sf"/>
</dbReference>
<dbReference type="InterPro" id="IPR016188">
    <property type="entry name" value="PurM-like_N"/>
</dbReference>
<dbReference type="InterPro" id="IPR036921">
    <property type="entry name" value="PurM-like_N_sf"/>
</dbReference>
<dbReference type="InterPro" id="IPR004733">
    <property type="entry name" value="PurM_cligase"/>
</dbReference>
<dbReference type="NCBIfam" id="TIGR00878">
    <property type="entry name" value="purM"/>
    <property type="match status" value="1"/>
</dbReference>
<dbReference type="PANTHER" id="PTHR10520:SF12">
    <property type="entry name" value="TRIFUNCTIONAL PURINE BIOSYNTHETIC PROTEIN ADENOSINE-3"/>
    <property type="match status" value="1"/>
</dbReference>
<dbReference type="PANTHER" id="PTHR10520">
    <property type="entry name" value="TRIFUNCTIONAL PURINE BIOSYNTHETIC PROTEIN ADENOSINE-3-RELATED"/>
    <property type="match status" value="1"/>
</dbReference>
<dbReference type="Pfam" id="PF00586">
    <property type="entry name" value="AIRS"/>
    <property type="match status" value="1"/>
</dbReference>
<dbReference type="Pfam" id="PF02769">
    <property type="entry name" value="AIRS_C"/>
    <property type="match status" value="1"/>
</dbReference>
<dbReference type="SUPFAM" id="SSF56042">
    <property type="entry name" value="PurM C-terminal domain-like"/>
    <property type="match status" value="1"/>
</dbReference>
<dbReference type="SUPFAM" id="SSF55326">
    <property type="entry name" value="PurM N-terminal domain-like"/>
    <property type="match status" value="1"/>
</dbReference>
<evidence type="ECO:0000255" key="1">
    <source>
        <dbReference type="HAMAP-Rule" id="MF_00741"/>
    </source>
</evidence>
<gene>
    <name evidence="1" type="primary">purM</name>
    <name type="ordered locus">VIBHAR_03200</name>
</gene>
<keyword id="KW-0067">ATP-binding</keyword>
<keyword id="KW-0963">Cytoplasm</keyword>
<keyword id="KW-0436">Ligase</keyword>
<keyword id="KW-0547">Nucleotide-binding</keyword>
<keyword id="KW-0658">Purine biosynthesis</keyword>
<comment type="catalytic activity">
    <reaction evidence="1">
        <text>2-formamido-N(1)-(5-O-phospho-beta-D-ribosyl)acetamidine + ATP = 5-amino-1-(5-phospho-beta-D-ribosyl)imidazole + ADP + phosphate + H(+)</text>
        <dbReference type="Rhea" id="RHEA:23032"/>
        <dbReference type="ChEBI" id="CHEBI:15378"/>
        <dbReference type="ChEBI" id="CHEBI:30616"/>
        <dbReference type="ChEBI" id="CHEBI:43474"/>
        <dbReference type="ChEBI" id="CHEBI:137981"/>
        <dbReference type="ChEBI" id="CHEBI:147287"/>
        <dbReference type="ChEBI" id="CHEBI:456216"/>
        <dbReference type="EC" id="6.3.3.1"/>
    </reaction>
</comment>
<comment type="pathway">
    <text evidence="1">Purine metabolism; IMP biosynthesis via de novo pathway; 5-amino-1-(5-phospho-D-ribosyl)imidazole from N(2)-formyl-N(1)-(5-phospho-D-ribosyl)glycinamide: step 2/2.</text>
</comment>
<comment type="subcellular location">
    <subcellularLocation>
        <location evidence="1">Cytoplasm</location>
    </subcellularLocation>
</comment>
<comment type="similarity">
    <text evidence="1">Belongs to the AIR synthase family.</text>
</comment>
<accession>A7MY25</accession>
<feature type="chain" id="PRO_1000046482" description="Phosphoribosylformylglycinamidine cyclo-ligase">
    <location>
        <begin position="1"/>
        <end position="346"/>
    </location>
</feature>
<proteinExistence type="inferred from homology"/>